<protein>
    <recommendedName>
        <fullName>ATP phosphoribosyltransferase</fullName>
        <shortName>ATP-PRT</shortName>
        <shortName>ATP-PRTase</shortName>
        <ecNumber>2.4.2.17</ecNumber>
    </recommendedName>
</protein>
<reference key="1">
    <citation type="journal article" date="2001" name="Science">
        <title>Comparative genomics of Listeria species.</title>
        <authorList>
            <person name="Glaser P."/>
            <person name="Frangeul L."/>
            <person name="Buchrieser C."/>
            <person name="Rusniok C."/>
            <person name="Amend A."/>
            <person name="Baquero F."/>
            <person name="Berche P."/>
            <person name="Bloecker H."/>
            <person name="Brandt P."/>
            <person name="Chakraborty T."/>
            <person name="Charbit A."/>
            <person name="Chetouani F."/>
            <person name="Couve E."/>
            <person name="de Daruvar A."/>
            <person name="Dehoux P."/>
            <person name="Domann E."/>
            <person name="Dominguez-Bernal G."/>
            <person name="Duchaud E."/>
            <person name="Durant L."/>
            <person name="Dussurget O."/>
            <person name="Entian K.-D."/>
            <person name="Fsihi H."/>
            <person name="Garcia-del Portillo F."/>
            <person name="Garrido P."/>
            <person name="Gautier L."/>
            <person name="Goebel W."/>
            <person name="Gomez-Lopez N."/>
            <person name="Hain T."/>
            <person name="Hauf J."/>
            <person name="Jackson D."/>
            <person name="Jones L.-M."/>
            <person name="Kaerst U."/>
            <person name="Kreft J."/>
            <person name="Kuhn M."/>
            <person name="Kunst F."/>
            <person name="Kurapkat G."/>
            <person name="Madueno E."/>
            <person name="Maitournam A."/>
            <person name="Mata Vicente J."/>
            <person name="Ng E."/>
            <person name="Nedjari H."/>
            <person name="Nordsiek G."/>
            <person name="Novella S."/>
            <person name="de Pablos B."/>
            <person name="Perez-Diaz J.-C."/>
            <person name="Purcell R."/>
            <person name="Remmel B."/>
            <person name="Rose M."/>
            <person name="Schlueter T."/>
            <person name="Simoes N."/>
            <person name="Tierrez A."/>
            <person name="Vazquez-Boland J.-A."/>
            <person name="Voss H."/>
            <person name="Wehland J."/>
            <person name="Cossart P."/>
        </authorList>
    </citation>
    <scope>NUCLEOTIDE SEQUENCE [LARGE SCALE GENOMIC DNA]</scope>
    <source>
        <strain>ATCC BAA-679 / EGD-e</strain>
    </source>
</reference>
<comment type="function">
    <text evidence="1">Catalyzes the condensation of ATP and 5-phosphoribose 1-diphosphate to form N'-(5'-phosphoribosyl)-ATP (PR-ATP). Has a crucial role in the pathway because the rate of histidine biosynthesis seems to be controlled primarily by regulation of HisG enzymatic activity (By similarity).</text>
</comment>
<comment type="catalytic activity">
    <reaction>
        <text>1-(5-phospho-beta-D-ribosyl)-ATP + diphosphate = 5-phospho-alpha-D-ribose 1-diphosphate + ATP</text>
        <dbReference type="Rhea" id="RHEA:18473"/>
        <dbReference type="ChEBI" id="CHEBI:30616"/>
        <dbReference type="ChEBI" id="CHEBI:33019"/>
        <dbReference type="ChEBI" id="CHEBI:58017"/>
        <dbReference type="ChEBI" id="CHEBI:73183"/>
        <dbReference type="EC" id="2.4.2.17"/>
    </reaction>
</comment>
<comment type="pathway">
    <text>Amino-acid biosynthesis; L-histidine biosynthesis; L-histidine from 5-phospho-alpha-D-ribose 1-diphosphate: step 1/9.</text>
</comment>
<comment type="subunit">
    <text evidence="1">Heteromultimer composed of HisG and HisZ subunits.</text>
</comment>
<comment type="subcellular location">
    <subcellularLocation>
        <location evidence="1">Cytoplasm</location>
    </subcellularLocation>
</comment>
<comment type="domain">
    <text>Lacks the C-terminal regulatory region which is replaced by HisZ.</text>
</comment>
<comment type="similarity">
    <text evidence="2">Belongs to the ATP phosphoribosyltransferase family. Short subfamily.</text>
</comment>
<sequence>MKALKIALTKGRLEKDAVALLEKAGIDCSSMTDKKRKLIFHSSTQPISFILVKAVDVMTYVKHGVADIGIVGKDVLMEASKSHYEMLDLEIGKCQFCLASTPDFDPSSYRRKIIATKYPTVASKFFREKGEDVEIIKIEGSVEIAPVLDLADAIIDIVETGSTLKENGLIIYEKMYPISARLIVNKASLKQNKTQIFHLIDQLEQAIKEELAE</sequence>
<dbReference type="EC" id="2.4.2.17"/>
<dbReference type="EMBL" id="AL591975">
    <property type="protein sequence ID" value="CAC98647.1"/>
    <property type="molecule type" value="Genomic_DNA"/>
</dbReference>
<dbReference type="PIR" id="AI1145">
    <property type="entry name" value="AI1145"/>
</dbReference>
<dbReference type="RefSeq" id="NP_464096.1">
    <property type="nucleotide sequence ID" value="NC_003210.1"/>
</dbReference>
<dbReference type="RefSeq" id="WP_003721362.1">
    <property type="nucleotide sequence ID" value="NZ_CP149495.1"/>
</dbReference>
<dbReference type="SMR" id="Q8Y9G0"/>
<dbReference type="STRING" id="169963.gene:17593219"/>
<dbReference type="PaxDb" id="169963-lmo0568"/>
<dbReference type="EnsemblBacteria" id="CAC98647">
    <property type="protein sequence ID" value="CAC98647"/>
    <property type="gene ID" value="CAC98647"/>
</dbReference>
<dbReference type="GeneID" id="985390"/>
<dbReference type="KEGG" id="lmo:lmo0568"/>
<dbReference type="PATRIC" id="fig|169963.11.peg.587"/>
<dbReference type="eggNOG" id="COG0040">
    <property type="taxonomic scope" value="Bacteria"/>
</dbReference>
<dbReference type="HOGENOM" id="CLU_038115_2_0_9"/>
<dbReference type="OrthoDB" id="9801867at2"/>
<dbReference type="PhylomeDB" id="Q8Y9G0"/>
<dbReference type="BioCyc" id="LMON169963:LMO0568-MONOMER"/>
<dbReference type="UniPathway" id="UPA00031">
    <property type="reaction ID" value="UER00006"/>
</dbReference>
<dbReference type="Proteomes" id="UP000000817">
    <property type="component" value="Chromosome"/>
</dbReference>
<dbReference type="GO" id="GO:0005737">
    <property type="term" value="C:cytoplasm"/>
    <property type="evidence" value="ECO:0007669"/>
    <property type="project" value="UniProtKB-SubCell"/>
</dbReference>
<dbReference type="GO" id="GO:0005524">
    <property type="term" value="F:ATP binding"/>
    <property type="evidence" value="ECO:0007669"/>
    <property type="project" value="UniProtKB-KW"/>
</dbReference>
<dbReference type="GO" id="GO:0003879">
    <property type="term" value="F:ATP phosphoribosyltransferase activity"/>
    <property type="evidence" value="ECO:0000318"/>
    <property type="project" value="GO_Central"/>
</dbReference>
<dbReference type="GO" id="GO:0000105">
    <property type="term" value="P:L-histidine biosynthetic process"/>
    <property type="evidence" value="ECO:0000318"/>
    <property type="project" value="GO_Central"/>
</dbReference>
<dbReference type="CDD" id="cd13595">
    <property type="entry name" value="PBP2_HisGs"/>
    <property type="match status" value="1"/>
</dbReference>
<dbReference type="FunFam" id="3.40.190.10:FF:000008">
    <property type="entry name" value="ATP phosphoribosyltransferase"/>
    <property type="match status" value="1"/>
</dbReference>
<dbReference type="FunFam" id="3.40.190.10:FF:000011">
    <property type="entry name" value="ATP phosphoribosyltransferase"/>
    <property type="match status" value="1"/>
</dbReference>
<dbReference type="Gene3D" id="3.40.190.10">
    <property type="entry name" value="Periplasmic binding protein-like II"/>
    <property type="match status" value="2"/>
</dbReference>
<dbReference type="HAMAP" id="MF_01018">
    <property type="entry name" value="HisG_Short"/>
    <property type="match status" value="1"/>
</dbReference>
<dbReference type="InterPro" id="IPR013820">
    <property type="entry name" value="ATP_PRibTrfase_cat"/>
</dbReference>
<dbReference type="InterPro" id="IPR018198">
    <property type="entry name" value="ATP_PRibTrfase_CS"/>
</dbReference>
<dbReference type="InterPro" id="IPR001348">
    <property type="entry name" value="ATP_PRibTrfase_HisG"/>
</dbReference>
<dbReference type="InterPro" id="IPR024893">
    <property type="entry name" value="ATP_PRibTrfase_HisG_short"/>
</dbReference>
<dbReference type="NCBIfam" id="TIGR00070">
    <property type="entry name" value="hisG"/>
    <property type="match status" value="1"/>
</dbReference>
<dbReference type="PANTHER" id="PTHR21403:SF8">
    <property type="entry name" value="ATP PHOSPHORIBOSYLTRANSFERASE"/>
    <property type="match status" value="1"/>
</dbReference>
<dbReference type="PANTHER" id="PTHR21403">
    <property type="entry name" value="ATP PHOSPHORIBOSYLTRANSFERASE ATP-PRTASE"/>
    <property type="match status" value="1"/>
</dbReference>
<dbReference type="Pfam" id="PF01634">
    <property type="entry name" value="HisG"/>
    <property type="match status" value="1"/>
</dbReference>
<dbReference type="SUPFAM" id="SSF53850">
    <property type="entry name" value="Periplasmic binding protein-like II"/>
    <property type="match status" value="1"/>
</dbReference>
<dbReference type="PROSITE" id="PS01316">
    <property type="entry name" value="ATP_P_PHORIBOSYLTR"/>
    <property type="match status" value="1"/>
</dbReference>
<proteinExistence type="inferred from homology"/>
<name>HIS1_LISMO</name>
<feature type="chain" id="PRO_0000151917" description="ATP phosphoribosyltransferase">
    <location>
        <begin position="1"/>
        <end position="213"/>
    </location>
</feature>
<evidence type="ECO:0000250" key="1"/>
<evidence type="ECO:0000305" key="2"/>
<keyword id="KW-0028">Amino-acid biosynthesis</keyword>
<keyword id="KW-0067">ATP-binding</keyword>
<keyword id="KW-0963">Cytoplasm</keyword>
<keyword id="KW-0328">Glycosyltransferase</keyword>
<keyword id="KW-0368">Histidine biosynthesis</keyword>
<keyword id="KW-0547">Nucleotide-binding</keyword>
<keyword id="KW-1185">Reference proteome</keyword>
<keyword id="KW-0808">Transferase</keyword>
<accession>Q8Y9G0</accession>
<gene>
    <name type="primary">hisG</name>
    <name type="ordered locus">lmo0568</name>
</gene>
<organism>
    <name type="scientific">Listeria monocytogenes serovar 1/2a (strain ATCC BAA-679 / EGD-e)</name>
    <dbReference type="NCBI Taxonomy" id="169963"/>
    <lineage>
        <taxon>Bacteria</taxon>
        <taxon>Bacillati</taxon>
        <taxon>Bacillota</taxon>
        <taxon>Bacilli</taxon>
        <taxon>Bacillales</taxon>
        <taxon>Listeriaceae</taxon>
        <taxon>Listeria</taxon>
    </lineage>
</organism>